<reference key="1">
    <citation type="journal article" date="1993" name="Mol. Gen. Genet.">
        <title>Molecular structure and genetic regulation of SFA, a gene responsible for resistance to formaldehyde in Saccharomyces cerevisiae, and characterization of its protein product.</title>
        <authorList>
            <person name="Wehner E.P."/>
            <person name="Rao E."/>
            <person name="Brendel M."/>
        </authorList>
    </citation>
    <scope>NUCLEOTIDE SEQUENCE [GENOMIC DNA]</scope>
    <source>
        <strain>ATCC 38626 / AH22 / NRRL Y-12843</strain>
    </source>
</reference>
<reference key="2">
    <citation type="journal article" date="1997" name="Nature">
        <title>The nucleotide sequence of Saccharomyces cerevisiae chromosome IV.</title>
        <authorList>
            <person name="Jacq C."/>
            <person name="Alt-Moerbe J."/>
            <person name="Andre B."/>
            <person name="Arnold W."/>
            <person name="Bahr A."/>
            <person name="Ballesta J.P.G."/>
            <person name="Bargues M."/>
            <person name="Baron L."/>
            <person name="Becker A."/>
            <person name="Biteau N."/>
            <person name="Bloecker H."/>
            <person name="Blugeon C."/>
            <person name="Boskovic J."/>
            <person name="Brandt P."/>
            <person name="Brueckner M."/>
            <person name="Buitrago M.J."/>
            <person name="Coster F."/>
            <person name="Delaveau T."/>
            <person name="del Rey F."/>
            <person name="Dujon B."/>
            <person name="Eide L.G."/>
            <person name="Garcia-Cantalejo J.M."/>
            <person name="Goffeau A."/>
            <person name="Gomez-Peris A."/>
            <person name="Granotier C."/>
            <person name="Hanemann V."/>
            <person name="Hankeln T."/>
            <person name="Hoheisel J.D."/>
            <person name="Jaeger W."/>
            <person name="Jimenez A."/>
            <person name="Jonniaux J.-L."/>
            <person name="Kraemer C."/>
            <person name="Kuester H."/>
            <person name="Laamanen P."/>
            <person name="Legros Y."/>
            <person name="Louis E.J."/>
            <person name="Moeller-Rieker S."/>
            <person name="Monnet A."/>
            <person name="Moro M."/>
            <person name="Mueller-Auer S."/>
            <person name="Nussbaumer B."/>
            <person name="Paricio N."/>
            <person name="Paulin L."/>
            <person name="Perea J."/>
            <person name="Perez-Alonso M."/>
            <person name="Perez-Ortin J.E."/>
            <person name="Pohl T.M."/>
            <person name="Prydz H."/>
            <person name="Purnelle B."/>
            <person name="Rasmussen S.W."/>
            <person name="Remacha M.A."/>
            <person name="Revuelta J.L."/>
            <person name="Rieger M."/>
            <person name="Salom D."/>
            <person name="Saluz H.P."/>
            <person name="Saiz J.E."/>
            <person name="Saren A.-M."/>
            <person name="Schaefer M."/>
            <person name="Scharfe M."/>
            <person name="Schmidt E.R."/>
            <person name="Schneider C."/>
            <person name="Scholler P."/>
            <person name="Schwarz S."/>
            <person name="Soler-Mira A."/>
            <person name="Urrestarazu L.A."/>
            <person name="Verhasselt P."/>
            <person name="Vissers S."/>
            <person name="Voet M."/>
            <person name="Volckaert G."/>
            <person name="Wagner G."/>
            <person name="Wambutt R."/>
            <person name="Wedler E."/>
            <person name="Wedler H."/>
            <person name="Woelfl S."/>
            <person name="Harris D.E."/>
            <person name="Bowman S."/>
            <person name="Brown D."/>
            <person name="Churcher C.M."/>
            <person name="Connor R."/>
            <person name="Dedman K."/>
            <person name="Gentles S."/>
            <person name="Hamlin N."/>
            <person name="Hunt S."/>
            <person name="Jones L."/>
            <person name="McDonald S."/>
            <person name="Murphy L.D."/>
            <person name="Niblett D."/>
            <person name="Odell C."/>
            <person name="Oliver K."/>
            <person name="Rajandream M.A."/>
            <person name="Richards C."/>
            <person name="Shore L."/>
            <person name="Walsh S.V."/>
            <person name="Barrell B.G."/>
            <person name="Dietrich F.S."/>
            <person name="Mulligan J.T."/>
            <person name="Allen E."/>
            <person name="Araujo R."/>
            <person name="Aviles E."/>
            <person name="Berno A."/>
            <person name="Carpenter J."/>
            <person name="Chen E."/>
            <person name="Cherry J.M."/>
            <person name="Chung E."/>
            <person name="Duncan M."/>
            <person name="Hunicke-Smith S."/>
            <person name="Hyman R.W."/>
            <person name="Komp C."/>
            <person name="Lashkari D."/>
            <person name="Lew H."/>
            <person name="Lin D."/>
            <person name="Mosedale D."/>
            <person name="Nakahara K."/>
            <person name="Namath A."/>
            <person name="Oefner P."/>
            <person name="Oh C."/>
            <person name="Petel F.X."/>
            <person name="Roberts D."/>
            <person name="Schramm S."/>
            <person name="Schroeder M."/>
            <person name="Shogren T."/>
            <person name="Shroff N."/>
            <person name="Winant A."/>
            <person name="Yelton M.A."/>
            <person name="Botstein D."/>
            <person name="Davis R.W."/>
            <person name="Johnston M."/>
            <person name="Andrews S."/>
            <person name="Brinkman R."/>
            <person name="Cooper J."/>
            <person name="Ding H."/>
            <person name="Du Z."/>
            <person name="Favello A."/>
            <person name="Fulton L."/>
            <person name="Gattung S."/>
            <person name="Greco T."/>
            <person name="Hallsworth K."/>
            <person name="Hawkins J."/>
            <person name="Hillier L.W."/>
            <person name="Jier M."/>
            <person name="Johnson D."/>
            <person name="Johnston L."/>
            <person name="Kirsten J."/>
            <person name="Kucaba T."/>
            <person name="Langston Y."/>
            <person name="Latreille P."/>
            <person name="Le T."/>
            <person name="Mardis E."/>
            <person name="Menezes S."/>
            <person name="Miller N."/>
            <person name="Nhan M."/>
            <person name="Pauley A."/>
            <person name="Peluso D."/>
            <person name="Rifkin L."/>
            <person name="Riles L."/>
            <person name="Taich A."/>
            <person name="Trevaskis E."/>
            <person name="Vignati D."/>
            <person name="Wilcox L."/>
            <person name="Wohldman P."/>
            <person name="Vaudin M."/>
            <person name="Wilson R."/>
            <person name="Waterston R."/>
            <person name="Albermann K."/>
            <person name="Hani J."/>
            <person name="Heumann K."/>
            <person name="Kleine K."/>
            <person name="Mewes H.-W."/>
            <person name="Zollner A."/>
            <person name="Zaccaria P."/>
        </authorList>
    </citation>
    <scope>NUCLEOTIDE SEQUENCE [LARGE SCALE GENOMIC DNA]</scope>
    <source>
        <strain>ATCC 204508 / S288c</strain>
    </source>
</reference>
<reference key="3">
    <citation type="journal article" date="2014" name="G3 (Bethesda)">
        <title>The reference genome sequence of Saccharomyces cerevisiae: Then and now.</title>
        <authorList>
            <person name="Engel S.R."/>
            <person name="Dietrich F.S."/>
            <person name="Fisk D.G."/>
            <person name="Binkley G."/>
            <person name="Balakrishnan R."/>
            <person name="Costanzo M.C."/>
            <person name="Dwight S.S."/>
            <person name="Hitz B.C."/>
            <person name="Karra K."/>
            <person name="Nash R.S."/>
            <person name="Weng S."/>
            <person name="Wong E.D."/>
            <person name="Lloyd P."/>
            <person name="Skrzypek M.S."/>
            <person name="Miyasato S.R."/>
            <person name="Simison M."/>
            <person name="Cherry J.M."/>
        </authorList>
    </citation>
    <scope>GENOME REANNOTATION</scope>
    <source>
        <strain>ATCC 204508 / S288c</strain>
    </source>
</reference>
<reference key="4">
    <citation type="journal article" date="2003" name="Nature">
        <title>Global analysis of protein expression in yeast.</title>
        <authorList>
            <person name="Ghaemmaghami S."/>
            <person name="Huh W.-K."/>
            <person name="Bower K."/>
            <person name="Howson R.W."/>
            <person name="Belle A."/>
            <person name="Dephoure N."/>
            <person name="O'Shea E.K."/>
            <person name="Weissman J.S."/>
        </authorList>
    </citation>
    <scope>LEVEL OF PROTEIN EXPRESSION [LARGE SCALE ANALYSIS]</scope>
</reference>
<reference key="5">
    <citation type="journal article" date="2005" name="Mol. Cell. Proteomics">
        <title>Quantitative phosphoproteomics applied to the yeast pheromone signaling pathway.</title>
        <authorList>
            <person name="Gruhler A."/>
            <person name="Olsen J.V."/>
            <person name="Mohammed S."/>
            <person name="Mortensen P."/>
            <person name="Faergeman N.J."/>
            <person name="Mann M."/>
            <person name="Jensen O.N."/>
        </authorList>
    </citation>
    <scope>PHOSPHORYLATION [LARGE SCALE ANALYSIS] AT SER-345</scope>
    <scope>IDENTIFICATION BY MASS SPECTROMETRY [LARGE SCALE ANALYSIS]</scope>
    <source>
        <strain>YAL6B</strain>
    </source>
</reference>
<reference key="6">
    <citation type="journal article" date="2007" name="J. Proteome Res.">
        <title>Large-scale phosphorylation analysis of alpha-factor-arrested Saccharomyces cerevisiae.</title>
        <authorList>
            <person name="Li X."/>
            <person name="Gerber S.A."/>
            <person name="Rudner A.D."/>
            <person name="Beausoleil S.A."/>
            <person name="Haas W."/>
            <person name="Villen J."/>
            <person name="Elias J.E."/>
            <person name="Gygi S.P."/>
        </authorList>
    </citation>
    <scope>PHOSPHORYLATION [LARGE SCALE ANALYSIS] AT SER-455</scope>
    <scope>IDENTIFICATION BY MASS SPECTROMETRY [LARGE SCALE ANALYSIS]</scope>
    <source>
        <strain>ADR376</strain>
    </source>
</reference>
<reference key="7">
    <citation type="journal article" date="2008" name="Mol. Cell. Proteomics">
        <title>A multidimensional chromatography technology for in-depth phosphoproteome analysis.</title>
        <authorList>
            <person name="Albuquerque C.P."/>
            <person name="Smolka M.B."/>
            <person name="Payne S.H."/>
            <person name="Bafna V."/>
            <person name="Eng J."/>
            <person name="Zhou H."/>
        </authorList>
    </citation>
    <scope>PHOSPHORYLATION [LARGE SCALE ANALYSIS] AT SER-345 AND SER-455</scope>
    <scope>IDENTIFICATION BY MASS SPECTROMETRY [LARGE SCALE ANALYSIS]</scope>
</reference>
<reference key="8">
    <citation type="journal article" date="2009" name="Science">
        <title>Global analysis of Cdk1 substrate phosphorylation sites provides insights into evolution.</title>
        <authorList>
            <person name="Holt L.J."/>
            <person name="Tuch B.B."/>
            <person name="Villen J."/>
            <person name="Johnson A.D."/>
            <person name="Gygi S.P."/>
            <person name="Morgan D.O."/>
        </authorList>
    </citation>
    <scope>PHOSPHORYLATION [LARGE SCALE ANALYSIS] AT SER-630</scope>
    <scope>IDENTIFICATION BY MASS SPECTROMETRY [LARGE SCALE ANALYSIS]</scope>
</reference>
<accession>P32770</accession>
<accession>D6VRI4</accession>
<accession>Q12228</accession>
<sequence>MHYVVLELQVAHLPDTPKDQCRIANIAFQIVNAETLVCHYGTNSLPSIEVNGTTKSLESAMVQLDKDIHDVIGNDDFVLVSLYSTWHIRVTLPRQARDDGFILTSYLQHPKVFDLWKEFDRWCVNHPEILGQKKAISNNNCNTKSISINAAKNTKDLDEIVRILEVSIPTEEAGSVPEIYSLLKRTTDILIQLHKKCTSPEDMESVLTKPYDSHTDIRAFLQEKSKILYMNNLPPDTTQSELESWFTQYGVRPVGFWTVKNIVEDTSNVNNNWSLNNSPYVEDQDSISGFVVFQTHEEATEVLALNGRSILSNLANTKQPRVVEHVLELQPSSTGVLDKAQEILSPFPQSKNKPRPGDWNCPSCGFSNFQRRTACFRCSFPAPSNSQIHTANSNNNVNSSRNNLNNRVNSGSSSNISNTAANHPYGAPEFNMIANNTPAALTYNRAHFPAITPLSRQNSLNMAPSNSGSPIIIADHFSGNNNIAPNYRYNNNINNNNNNINNMTNNRYNINNNINGNGNGNGNNSNNNNNHNNNHNNNHHNGSINSNSNTNNNNNNNNGNNSNNCNSNIGMGGCGSNMPFRAGDWKCSTCTYHNFAKNVVCLRCGGPKSISGDASETNHYIDSSTFGPASRTPSNNNISVNTNGGSNAGRTDGNDNKGRDISLMEFMSPPLSMATKSMKEGDGNGSSFNEFKSDKANVNFSNVGDNSAFGNGFNSSIRW</sequence>
<organism>
    <name type="scientific">Saccharomyces cerevisiae (strain ATCC 204508 / S288c)</name>
    <name type="common">Baker's yeast</name>
    <dbReference type="NCBI Taxonomy" id="559292"/>
    <lineage>
        <taxon>Eukaryota</taxon>
        <taxon>Fungi</taxon>
        <taxon>Dikarya</taxon>
        <taxon>Ascomycota</taxon>
        <taxon>Saccharomycotina</taxon>
        <taxon>Saccharomycetes</taxon>
        <taxon>Saccharomycetales</taxon>
        <taxon>Saccharomycetaceae</taxon>
        <taxon>Saccharomyces</taxon>
    </lineage>
</organism>
<gene>
    <name evidence="7" type="primary">NRP1</name>
    <name evidence="6" type="synonym">ARP</name>
    <name evidence="6" type="synonym">ARP1</name>
    <name evidence="7" type="ordered locus">YDL167C</name>
</gene>
<protein>
    <recommendedName>
        <fullName evidence="6">Putative RNA-binding protein involved in heterochromatin assembly</fullName>
    </recommendedName>
    <alternativeName>
        <fullName evidence="6">Asparagine-rich protein</fullName>
        <shortName evidence="6">Protein ARP</shortName>
    </alternativeName>
</protein>
<feature type="chain" id="PRO_0000081689" description="Putative RNA-binding protein involved in heterochromatin assembly">
    <location>
        <begin position="1"/>
        <end position="719"/>
    </location>
</feature>
<feature type="domain" description="RRM" evidence="2">
    <location>
        <begin position="226"/>
        <end position="322"/>
    </location>
</feature>
<feature type="zinc finger region" description="RanBP2-type 1" evidence="3">
    <location>
        <begin position="355"/>
        <end position="384"/>
    </location>
</feature>
<feature type="zinc finger region" description="RanBP2-type 2" evidence="3">
    <location>
        <begin position="581"/>
        <end position="610"/>
    </location>
</feature>
<feature type="region of interest" description="Disordered" evidence="4">
    <location>
        <begin position="389"/>
        <end position="415"/>
    </location>
</feature>
<feature type="region of interest" description="Disordered" evidence="4">
    <location>
        <begin position="511"/>
        <end position="561"/>
    </location>
</feature>
<feature type="region of interest" description="Disordered" evidence="4">
    <location>
        <begin position="622"/>
        <end position="661"/>
    </location>
</feature>
<feature type="compositionally biased region" description="Low complexity" evidence="4">
    <location>
        <begin position="392"/>
        <end position="415"/>
    </location>
</feature>
<feature type="compositionally biased region" description="Polar residues" evidence="4">
    <location>
        <begin position="622"/>
        <end position="649"/>
    </location>
</feature>
<feature type="compositionally biased region" description="Basic and acidic residues" evidence="4">
    <location>
        <begin position="652"/>
        <end position="661"/>
    </location>
</feature>
<feature type="modified residue" description="Phosphoserine" evidence="8 10">
    <location>
        <position position="345"/>
    </location>
</feature>
<feature type="modified residue" description="Phosphoserine" evidence="9 10">
    <location>
        <position position="455"/>
    </location>
</feature>
<feature type="modified residue" description="Phosphoserine" evidence="11">
    <location>
        <position position="630"/>
    </location>
</feature>
<feature type="sequence conflict" description="In Ref. 1; CAA48159." evidence="6" ref="1">
    <original>I</original>
    <variation>N</variation>
    <location>
        <position position="493"/>
    </location>
</feature>
<dbReference type="EMBL" id="X68020">
    <property type="protein sequence ID" value="CAA48159.1"/>
    <property type="molecule type" value="Genomic_DNA"/>
</dbReference>
<dbReference type="EMBL" id="Z67750">
    <property type="protein sequence ID" value="CAA91579.1"/>
    <property type="molecule type" value="Genomic_DNA"/>
</dbReference>
<dbReference type="EMBL" id="Z74215">
    <property type="protein sequence ID" value="CAA98741.1"/>
    <property type="molecule type" value="Genomic_DNA"/>
</dbReference>
<dbReference type="EMBL" id="BK006938">
    <property type="protein sequence ID" value="DAA11694.1"/>
    <property type="molecule type" value="Genomic_DNA"/>
</dbReference>
<dbReference type="PIR" id="S61046">
    <property type="entry name" value="S61046"/>
</dbReference>
<dbReference type="RefSeq" id="NP_010114.1">
    <property type="nucleotide sequence ID" value="NM_001180227.1"/>
</dbReference>
<dbReference type="BioGRID" id="31898">
    <property type="interactions" value="110"/>
</dbReference>
<dbReference type="DIP" id="DIP-5159N"/>
<dbReference type="FunCoup" id="P32770">
    <property type="interactions" value="217"/>
</dbReference>
<dbReference type="IntAct" id="P32770">
    <property type="interactions" value="26"/>
</dbReference>
<dbReference type="STRING" id="4932.YDL167C"/>
<dbReference type="GlyGen" id="P32770">
    <property type="glycosylation" value="2 sites, 1 O-linked glycan (2 sites)"/>
</dbReference>
<dbReference type="iPTMnet" id="P32770"/>
<dbReference type="PaxDb" id="4932-YDL167C"/>
<dbReference type="PeptideAtlas" id="P32770"/>
<dbReference type="EnsemblFungi" id="YDL167C_mRNA">
    <property type="protein sequence ID" value="YDL167C"/>
    <property type="gene ID" value="YDL167C"/>
</dbReference>
<dbReference type="GeneID" id="851387"/>
<dbReference type="KEGG" id="sce:YDL167C"/>
<dbReference type="AGR" id="SGD:S000002326"/>
<dbReference type="SGD" id="S000002326">
    <property type="gene designation" value="NRP1"/>
</dbReference>
<dbReference type="VEuPathDB" id="FungiDB:YDL167C"/>
<dbReference type="eggNOG" id="KOG4198">
    <property type="taxonomic scope" value="Eukaryota"/>
</dbReference>
<dbReference type="GeneTree" id="ENSGT00940000174896"/>
<dbReference type="HOGENOM" id="CLU_022834_0_0_1"/>
<dbReference type="InParanoid" id="P32770"/>
<dbReference type="OMA" id="CTYHNFA"/>
<dbReference type="OrthoDB" id="448399at2759"/>
<dbReference type="BioCyc" id="YEAST:G3O-29559-MONOMER"/>
<dbReference type="BioGRID-ORCS" id="851387">
    <property type="hits" value="1 hit in 10 CRISPR screens"/>
</dbReference>
<dbReference type="CD-CODE" id="A777E0F8">
    <property type="entry name" value="P-body"/>
</dbReference>
<dbReference type="CD-CODE" id="E03F929F">
    <property type="entry name" value="Stress granule"/>
</dbReference>
<dbReference type="PRO" id="PR:P32770"/>
<dbReference type="Proteomes" id="UP000002311">
    <property type="component" value="Chromosome IV"/>
</dbReference>
<dbReference type="RNAct" id="P32770">
    <property type="molecule type" value="protein"/>
</dbReference>
<dbReference type="GO" id="GO:0005694">
    <property type="term" value="C:chromosome"/>
    <property type="evidence" value="ECO:0007669"/>
    <property type="project" value="UniProtKB-SubCell"/>
</dbReference>
<dbReference type="GO" id="GO:0005737">
    <property type="term" value="C:cytoplasm"/>
    <property type="evidence" value="ECO:0007005"/>
    <property type="project" value="SGD"/>
</dbReference>
<dbReference type="GO" id="GO:0010494">
    <property type="term" value="C:cytoplasmic stress granule"/>
    <property type="evidence" value="ECO:0000314"/>
    <property type="project" value="SGD"/>
</dbReference>
<dbReference type="GO" id="GO:0005634">
    <property type="term" value="C:nucleus"/>
    <property type="evidence" value="ECO:0007669"/>
    <property type="project" value="UniProtKB-SubCell"/>
</dbReference>
<dbReference type="GO" id="GO:0003729">
    <property type="term" value="F:mRNA binding"/>
    <property type="evidence" value="ECO:0000318"/>
    <property type="project" value="GO_Central"/>
</dbReference>
<dbReference type="GO" id="GO:0008270">
    <property type="term" value="F:zinc ion binding"/>
    <property type="evidence" value="ECO:0007669"/>
    <property type="project" value="UniProtKB-KW"/>
</dbReference>
<dbReference type="CDD" id="cd12452">
    <property type="entry name" value="RRM_ARP_like"/>
    <property type="match status" value="1"/>
</dbReference>
<dbReference type="FunFam" id="4.10.1060.10:FF:000021">
    <property type="entry name" value="MUTL protein homolog 3"/>
    <property type="match status" value="1"/>
</dbReference>
<dbReference type="FunFam" id="4.10.1060.10:FF:000024">
    <property type="entry name" value="RNA-binding protein"/>
    <property type="match status" value="1"/>
</dbReference>
<dbReference type="Gene3D" id="3.30.70.330">
    <property type="match status" value="1"/>
</dbReference>
<dbReference type="Gene3D" id="4.10.1060.10">
    <property type="entry name" value="Zinc finger, RanBP2-type"/>
    <property type="match status" value="2"/>
</dbReference>
<dbReference type="InterPro" id="IPR034351">
    <property type="entry name" value="Nrp1_RRM"/>
</dbReference>
<dbReference type="InterPro" id="IPR012677">
    <property type="entry name" value="Nucleotide-bd_a/b_plait_sf"/>
</dbReference>
<dbReference type="InterPro" id="IPR035979">
    <property type="entry name" value="RBD_domain_sf"/>
</dbReference>
<dbReference type="InterPro" id="IPR000504">
    <property type="entry name" value="RRM_dom"/>
</dbReference>
<dbReference type="InterPro" id="IPR001876">
    <property type="entry name" value="Znf_RanBP2"/>
</dbReference>
<dbReference type="InterPro" id="IPR036443">
    <property type="entry name" value="Znf_RanBP2_sf"/>
</dbReference>
<dbReference type="PANTHER" id="PTHR23111:SF40">
    <property type="entry name" value="RNA-BINDING PROTEIN INVOLVED IN HETEROCHROMATIN ASSEMBLY-RELATED"/>
    <property type="match status" value="1"/>
</dbReference>
<dbReference type="PANTHER" id="PTHR23111">
    <property type="entry name" value="ZINC FINGER PROTEIN"/>
    <property type="match status" value="1"/>
</dbReference>
<dbReference type="Pfam" id="PF00641">
    <property type="entry name" value="Zn_ribbon_RanBP"/>
    <property type="match status" value="2"/>
</dbReference>
<dbReference type="SMART" id="SM00547">
    <property type="entry name" value="ZnF_RBZ"/>
    <property type="match status" value="2"/>
</dbReference>
<dbReference type="SUPFAM" id="SSF90209">
    <property type="entry name" value="Ran binding protein zinc finger-like"/>
    <property type="match status" value="2"/>
</dbReference>
<dbReference type="SUPFAM" id="SSF54928">
    <property type="entry name" value="RNA-binding domain, RBD"/>
    <property type="match status" value="1"/>
</dbReference>
<dbReference type="PROSITE" id="PS50102">
    <property type="entry name" value="RRM"/>
    <property type="match status" value="1"/>
</dbReference>
<dbReference type="PROSITE" id="PS01358">
    <property type="entry name" value="ZF_RANBP2_1"/>
    <property type="match status" value="2"/>
</dbReference>
<dbReference type="PROSITE" id="PS50199">
    <property type="entry name" value="ZF_RANBP2_2"/>
    <property type="match status" value="2"/>
</dbReference>
<evidence type="ECO:0000250" key="1">
    <source>
        <dbReference type="UniProtKB" id="O13801"/>
    </source>
</evidence>
<evidence type="ECO:0000255" key="2">
    <source>
        <dbReference type="PROSITE-ProRule" id="PRU00176"/>
    </source>
</evidence>
<evidence type="ECO:0000255" key="3">
    <source>
        <dbReference type="PROSITE-ProRule" id="PRU00322"/>
    </source>
</evidence>
<evidence type="ECO:0000256" key="4">
    <source>
        <dbReference type="SAM" id="MobiDB-lite"/>
    </source>
</evidence>
<evidence type="ECO:0000269" key="5">
    <source>
    </source>
</evidence>
<evidence type="ECO:0000305" key="6"/>
<evidence type="ECO:0000312" key="7">
    <source>
        <dbReference type="SGD" id="S000002326"/>
    </source>
</evidence>
<evidence type="ECO:0007744" key="8">
    <source>
    </source>
</evidence>
<evidence type="ECO:0007744" key="9">
    <source>
    </source>
</evidence>
<evidence type="ECO:0007744" key="10">
    <source>
    </source>
</evidence>
<evidence type="ECO:0007744" key="11">
    <source>
    </source>
</evidence>
<name>DRI1_YEAST</name>
<comment type="function">
    <text evidence="1">May play a role in chromatin organization.</text>
</comment>
<comment type="subcellular location">
    <subcellularLocation>
        <location evidence="1">Chromosome</location>
    </subcellularLocation>
    <subcellularLocation>
        <location evidence="1">Nucleus</location>
    </subcellularLocation>
</comment>
<comment type="miscellaneous">
    <text evidence="5">Present with 3570 molecules/cell in log phase SD medium.</text>
</comment>
<proteinExistence type="evidence at protein level"/>
<keyword id="KW-0158">Chromosome</keyword>
<keyword id="KW-0479">Metal-binding</keyword>
<keyword id="KW-0539">Nucleus</keyword>
<keyword id="KW-0597">Phosphoprotein</keyword>
<keyword id="KW-1185">Reference proteome</keyword>
<keyword id="KW-0677">Repeat</keyword>
<keyword id="KW-0694">RNA-binding</keyword>
<keyword id="KW-0862">Zinc</keyword>
<keyword id="KW-0863">Zinc-finger</keyword>